<name>CP9_CONAA</name>
<sequence>SCNNSCQQHSQCASHCVCLLNKCRTVN</sequence>
<accession>P83390</accession>
<keyword id="KW-0027">Amidation</keyword>
<keyword id="KW-0903">Direct protein sequencing</keyword>
<keyword id="KW-1015">Disulfide bond</keyword>
<keyword id="KW-0872">Ion channel impairing toxin</keyword>
<keyword id="KW-0528">Neurotoxin</keyword>
<keyword id="KW-0964">Secreted</keyword>
<keyword id="KW-0800">Toxin</keyword>
<comment type="function">
    <text evidence="3">Probable neurotoxin that inhibits ion channels.</text>
</comment>
<comment type="subcellular location">
    <subcellularLocation>
        <location evidence="2">Secreted</location>
    </subcellularLocation>
</comment>
<comment type="tissue specificity">
    <text evidence="4">Expressed by the venom duct.</text>
</comment>
<comment type="domain">
    <text evidence="3">The cysteine framework is IX (C-C-C-C-C-C).</text>
</comment>
<comment type="mass spectrometry"/>
<comment type="mass spectrometry"/>
<comment type="similarity">
    <text evidence="3">Belongs to the conotoxin P superfamily.</text>
</comment>
<dbReference type="SMR" id="P83390"/>
<dbReference type="TCDB" id="8.B.22.1.3">
    <property type="family name" value="the p-conotoxin cystine knot (p-cck) family"/>
</dbReference>
<dbReference type="ConoServer" id="1389">
    <property type="toxin name" value="Conotoxin"/>
</dbReference>
<dbReference type="GO" id="GO:0005576">
    <property type="term" value="C:extracellular region"/>
    <property type="evidence" value="ECO:0007669"/>
    <property type="project" value="UniProtKB-SubCell"/>
</dbReference>
<dbReference type="GO" id="GO:0099106">
    <property type="term" value="F:ion channel regulator activity"/>
    <property type="evidence" value="ECO:0007669"/>
    <property type="project" value="UniProtKB-KW"/>
</dbReference>
<dbReference type="GO" id="GO:0090729">
    <property type="term" value="F:toxin activity"/>
    <property type="evidence" value="ECO:0007669"/>
    <property type="project" value="UniProtKB-KW"/>
</dbReference>
<dbReference type="InterPro" id="IPR010012">
    <property type="entry name" value="Toxin_11"/>
</dbReference>
<dbReference type="Pfam" id="PF07473">
    <property type="entry name" value="Toxin_11"/>
    <property type="match status" value="1"/>
</dbReference>
<dbReference type="SUPFAM" id="SSF57059">
    <property type="entry name" value="omega toxin-like"/>
    <property type="match status" value="1"/>
</dbReference>
<proteinExistence type="evidence at protein level"/>
<reference key="1">
    <citation type="submission" date="2002-06" db="UniProtKB">
        <authorList>
            <person name="Saminathan R."/>
            <person name="Gopalakrishnakone P."/>
        </authorList>
    </citation>
    <scope>PROTEIN SEQUENCE</scope>
    <scope>SUBCELLULAR LOCATION</scope>
    <scope>MASS SPECTROMETRY</scope>
    <source>
        <tissue>Venom</tissue>
    </source>
</reference>
<protein>
    <recommendedName>
        <fullName>Conotoxin</fullName>
    </recommendedName>
</protein>
<evidence type="ECO:0000250" key="1">
    <source>
        <dbReference type="UniProtKB" id="Q9GU57"/>
    </source>
</evidence>
<evidence type="ECO:0000269" key="2">
    <source ref="1"/>
</evidence>
<evidence type="ECO:0000305" key="3"/>
<evidence type="ECO:0000305" key="4">
    <source ref="1"/>
</evidence>
<organism>
    <name type="scientific">Conus amadis</name>
    <name type="common">Amadis cone</name>
    <dbReference type="NCBI Taxonomy" id="198732"/>
    <lineage>
        <taxon>Eukaryota</taxon>
        <taxon>Metazoa</taxon>
        <taxon>Spiralia</taxon>
        <taxon>Lophotrochozoa</taxon>
        <taxon>Mollusca</taxon>
        <taxon>Gastropoda</taxon>
        <taxon>Caenogastropoda</taxon>
        <taxon>Neogastropoda</taxon>
        <taxon>Conoidea</taxon>
        <taxon>Conidae</taxon>
        <taxon>Conus</taxon>
        <taxon>Leptoconus</taxon>
    </lineage>
</organism>
<feature type="peptide" id="PRO_0000044489" description="Conotoxin" evidence="2">
    <location>
        <begin position="1"/>
        <end position="27"/>
    </location>
</feature>
<feature type="modified residue" description="Asparagine amide" evidence="1">
    <location>
        <position position="27"/>
    </location>
</feature>
<feature type="disulfide bond" evidence="1">
    <location>
        <begin position="2"/>
        <end position="16"/>
    </location>
</feature>
<feature type="disulfide bond" evidence="1">
    <location>
        <begin position="6"/>
        <end position="18"/>
    </location>
</feature>
<feature type="disulfide bond" evidence="1">
    <location>
        <begin position="12"/>
        <end position="23"/>
    </location>
</feature>